<protein>
    <recommendedName>
        <fullName evidence="1">A-type ATP synthase subunit D</fullName>
    </recommendedName>
</protein>
<comment type="function">
    <text evidence="1">Component of the A-type ATP synthase that produces ATP from ADP in the presence of a proton gradient across the membrane.</text>
</comment>
<comment type="subunit">
    <text evidence="1">Has multiple subunits with at least A(3), B(3), C, D, E, F, H, I and proteolipid K(x).</text>
</comment>
<comment type="subcellular location">
    <subcellularLocation>
        <location evidence="1">Cell membrane</location>
        <topology evidence="1">Peripheral membrane protein</topology>
    </subcellularLocation>
</comment>
<comment type="similarity">
    <text evidence="1">Belongs to the V-ATPase D subunit family.</text>
</comment>
<sequence>MALRDIKPTRSELINLKRKIQLSQRGYKILKMKRDGLIMEFFKILSEAKDSRGELLRRYKHAVEMMAVANTVEGALGVKAAAFSVKETPEITLKSKNIMGVVVPEIESSKVKKTLADRGYGVLGTSPVIDETASSFEDLVEAIIESAEIETTMKRLLDEIEKTKRRVNALEFKVIPELTEARDFIKMRLDEMEREELFRMKKIKARGSS</sequence>
<accession>A7IAU6</accession>
<name>AATD_METB6</name>
<gene>
    <name evidence="1" type="primary">atpD</name>
    <name type="ordered locus">Mboo_2343</name>
</gene>
<proteinExistence type="inferred from homology"/>
<dbReference type="EMBL" id="CP000780">
    <property type="protein sequence ID" value="ABS56857.1"/>
    <property type="molecule type" value="Genomic_DNA"/>
</dbReference>
<dbReference type="RefSeq" id="WP_012107918.1">
    <property type="nucleotide sequence ID" value="NC_009712.1"/>
</dbReference>
<dbReference type="SMR" id="A7IAU6"/>
<dbReference type="STRING" id="456442.Mboo_2343"/>
<dbReference type="GeneID" id="5411036"/>
<dbReference type="KEGG" id="mbn:Mboo_2343"/>
<dbReference type="eggNOG" id="arCOG04101">
    <property type="taxonomic scope" value="Archaea"/>
</dbReference>
<dbReference type="HOGENOM" id="CLU_069688_2_1_2"/>
<dbReference type="OrthoDB" id="117390at2157"/>
<dbReference type="Proteomes" id="UP000002408">
    <property type="component" value="Chromosome"/>
</dbReference>
<dbReference type="GO" id="GO:0005886">
    <property type="term" value="C:plasma membrane"/>
    <property type="evidence" value="ECO:0007669"/>
    <property type="project" value="UniProtKB-SubCell"/>
</dbReference>
<dbReference type="GO" id="GO:0005524">
    <property type="term" value="F:ATP binding"/>
    <property type="evidence" value="ECO:0007669"/>
    <property type="project" value="UniProtKB-UniRule"/>
</dbReference>
<dbReference type="GO" id="GO:0046933">
    <property type="term" value="F:proton-transporting ATP synthase activity, rotational mechanism"/>
    <property type="evidence" value="ECO:0007669"/>
    <property type="project" value="UniProtKB-UniRule"/>
</dbReference>
<dbReference type="GO" id="GO:0046961">
    <property type="term" value="F:proton-transporting ATPase activity, rotational mechanism"/>
    <property type="evidence" value="ECO:0007669"/>
    <property type="project" value="InterPro"/>
</dbReference>
<dbReference type="GO" id="GO:0042777">
    <property type="term" value="P:proton motive force-driven plasma membrane ATP synthesis"/>
    <property type="evidence" value="ECO:0007669"/>
    <property type="project" value="UniProtKB-UniRule"/>
</dbReference>
<dbReference type="FunFam" id="1.10.287.3240:FF:000007">
    <property type="entry name" value="V-type ATP synthase subunit D"/>
    <property type="match status" value="1"/>
</dbReference>
<dbReference type="Gene3D" id="1.10.287.3240">
    <property type="match status" value="1"/>
</dbReference>
<dbReference type="HAMAP" id="MF_00271">
    <property type="entry name" value="ATP_synth_D_arch"/>
    <property type="match status" value="1"/>
</dbReference>
<dbReference type="InterPro" id="IPR002699">
    <property type="entry name" value="V_ATPase_D"/>
</dbReference>
<dbReference type="NCBIfam" id="NF001542">
    <property type="entry name" value="PRK00373.1-1"/>
    <property type="match status" value="1"/>
</dbReference>
<dbReference type="NCBIfam" id="NF001545">
    <property type="entry name" value="PRK00373.1-4"/>
    <property type="match status" value="1"/>
</dbReference>
<dbReference type="NCBIfam" id="TIGR00309">
    <property type="entry name" value="V_ATPase_subD"/>
    <property type="match status" value="1"/>
</dbReference>
<dbReference type="PANTHER" id="PTHR11671">
    <property type="entry name" value="V-TYPE ATP SYNTHASE SUBUNIT D"/>
    <property type="match status" value="1"/>
</dbReference>
<dbReference type="Pfam" id="PF01813">
    <property type="entry name" value="ATP-synt_D"/>
    <property type="match status" value="1"/>
</dbReference>
<feature type="chain" id="PRO_1000059162" description="A-type ATP synthase subunit D">
    <location>
        <begin position="1"/>
        <end position="209"/>
    </location>
</feature>
<organism>
    <name type="scientific">Methanoregula boonei (strain DSM 21154 / JCM 14090 / 6A8)</name>
    <dbReference type="NCBI Taxonomy" id="456442"/>
    <lineage>
        <taxon>Archaea</taxon>
        <taxon>Methanobacteriati</taxon>
        <taxon>Methanobacteriota</taxon>
        <taxon>Stenosarchaea group</taxon>
        <taxon>Methanomicrobia</taxon>
        <taxon>Methanomicrobiales</taxon>
        <taxon>Methanoregulaceae</taxon>
        <taxon>Methanoregula</taxon>
    </lineage>
</organism>
<keyword id="KW-0066">ATP synthesis</keyword>
<keyword id="KW-1003">Cell membrane</keyword>
<keyword id="KW-0375">Hydrogen ion transport</keyword>
<keyword id="KW-0406">Ion transport</keyword>
<keyword id="KW-0472">Membrane</keyword>
<keyword id="KW-1185">Reference proteome</keyword>
<keyword id="KW-0813">Transport</keyword>
<reference key="1">
    <citation type="journal article" date="2015" name="Microbiology">
        <title>Genome of Methanoregula boonei 6A8 reveals adaptations to oligotrophic peatland environments.</title>
        <authorList>
            <person name="Braeuer S."/>
            <person name="Cadillo-Quiroz H."/>
            <person name="Kyrpides N."/>
            <person name="Woyke T."/>
            <person name="Goodwin L."/>
            <person name="Detter C."/>
            <person name="Podell S."/>
            <person name="Yavitt J.B."/>
            <person name="Zinder S.H."/>
        </authorList>
    </citation>
    <scope>NUCLEOTIDE SEQUENCE [LARGE SCALE GENOMIC DNA]</scope>
    <source>
        <strain>DSM 21154 / JCM 14090 / 6A8</strain>
    </source>
</reference>
<evidence type="ECO:0000255" key="1">
    <source>
        <dbReference type="HAMAP-Rule" id="MF_00271"/>
    </source>
</evidence>